<protein>
    <recommendedName>
        <fullName evidence="5">Fatty acid elongase sre1</fullName>
        <ecNumber>2.3.1.199</ecNumber>
    </recommendedName>
    <alternativeName>
        <fullName>3-keto acyl-CoA synthase sre1</fullName>
    </alternativeName>
    <alternativeName>
        <fullName>Elongation of fatty acids protein sre1</fullName>
    </alternativeName>
    <alternativeName>
        <fullName>Protein SRE1 homolog</fullName>
    </alternativeName>
    <alternativeName>
        <fullName>Very-long-chain 3-oxoacyl-CoA synthase sre1</fullName>
    </alternativeName>
</protein>
<feature type="chain" id="PRO_0000393465" description="Fatty acid elongase sre1">
    <location>
        <begin position="1"/>
        <end position="268"/>
    </location>
</feature>
<feature type="transmembrane region" description="Helical" evidence="2">
    <location>
        <begin position="31"/>
        <end position="51"/>
    </location>
</feature>
<feature type="transmembrane region" description="Helical" evidence="2">
    <location>
        <begin position="62"/>
        <end position="82"/>
    </location>
</feature>
<feature type="transmembrane region" description="Helical" evidence="2">
    <location>
        <begin position="110"/>
        <end position="130"/>
    </location>
</feature>
<feature type="transmembrane region" description="Helical" evidence="2">
    <location>
        <begin position="137"/>
        <end position="157"/>
    </location>
</feature>
<feature type="transmembrane region" description="Helical" evidence="2">
    <location>
        <begin position="161"/>
        <end position="181"/>
    </location>
</feature>
<feature type="transmembrane region" description="Helical" evidence="2">
    <location>
        <begin position="198"/>
        <end position="218"/>
    </location>
</feature>
<feature type="transmembrane region" description="Helical" evidence="2">
    <location>
        <begin position="227"/>
        <end position="247"/>
    </location>
</feature>
<keyword id="KW-0275">Fatty acid biosynthesis</keyword>
<keyword id="KW-0276">Fatty acid metabolism</keyword>
<keyword id="KW-0444">Lipid biosynthesis</keyword>
<keyword id="KW-0443">Lipid metabolism</keyword>
<keyword id="KW-0472">Membrane</keyword>
<keyword id="KW-1185">Reference proteome</keyword>
<keyword id="KW-0808">Transferase</keyword>
<keyword id="KW-0812">Transmembrane</keyword>
<keyword id="KW-1133">Transmembrane helix</keyword>
<dbReference type="EC" id="2.3.1.199"/>
<dbReference type="EMBL" id="AAFI02000043">
    <property type="protein sequence ID" value="EAL66470.1"/>
    <property type="molecule type" value="Genomic_DNA"/>
</dbReference>
<dbReference type="RefSeq" id="XP_640460.1">
    <property type="nucleotide sequence ID" value="XM_635368.1"/>
</dbReference>
<dbReference type="SMR" id="Q54TC9"/>
<dbReference type="FunCoup" id="Q54TC9">
    <property type="interactions" value="59"/>
</dbReference>
<dbReference type="STRING" id="44689.Q54TC9"/>
<dbReference type="PaxDb" id="44689-DDB0214890"/>
<dbReference type="EnsemblProtists" id="EAL66470">
    <property type="protein sequence ID" value="EAL66470"/>
    <property type="gene ID" value="DDB_G0281821"/>
</dbReference>
<dbReference type="GeneID" id="8623273"/>
<dbReference type="KEGG" id="ddi:DDB_G0281821"/>
<dbReference type="dictyBase" id="DDB_G0281821">
    <property type="gene designation" value="eloB"/>
</dbReference>
<dbReference type="VEuPathDB" id="AmoebaDB:DDB_G0281821"/>
<dbReference type="eggNOG" id="KOG3071">
    <property type="taxonomic scope" value="Eukaryota"/>
</dbReference>
<dbReference type="HOGENOM" id="CLU_048483_6_0_1"/>
<dbReference type="InParanoid" id="Q54TC9"/>
<dbReference type="OMA" id="FHHMAMV"/>
<dbReference type="PhylomeDB" id="Q54TC9"/>
<dbReference type="Reactome" id="R-DDI-2046105">
    <property type="pathway name" value="Linoleic acid (LA) metabolism"/>
</dbReference>
<dbReference type="Reactome" id="R-DDI-2046106">
    <property type="pathway name" value="alpha-linolenic acid (ALA) metabolism"/>
</dbReference>
<dbReference type="Reactome" id="R-DDI-75876">
    <property type="pathway name" value="Synthesis of very long-chain fatty acyl-CoAs"/>
</dbReference>
<dbReference type="PRO" id="PR:Q54TC9"/>
<dbReference type="Proteomes" id="UP000002195">
    <property type="component" value="Chromosome 3"/>
</dbReference>
<dbReference type="GO" id="GO:0005789">
    <property type="term" value="C:endoplasmic reticulum membrane"/>
    <property type="evidence" value="ECO:0000250"/>
    <property type="project" value="UniProtKB"/>
</dbReference>
<dbReference type="GO" id="GO:0009922">
    <property type="term" value="F:fatty acid elongase activity"/>
    <property type="evidence" value="ECO:0000318"/>
    <property type="project" value="GO_Central"/>
</dbReference>
<dbReference type="GO" id="GO:0034625">
    <property type="term" value="P:fatty acid elongation, monounsaturated fatty acid"/>
    <property type="evidence" value="ECO:0000318"/>
    <property type="project" value="GO_Central"/>
</dbReference>
<dbReference type="GO" id="GO:0034626">
    <property type="term" value="P:fatty acid elongation, polyunsaturated fatty acid"/>
    <property type="evidence" value="ECO:0000318"/>
    <property type="project" value="GO_Central"/>
</dbReference>
<dbReference type="GO" id="GO:0019367">
    <property type="term" value="P:fatty acid elongation, saturated fatty acid"/>
    <property type="evidence" value="ECO:0000318"/>
    <property type="project" value="GO_Central"/>
</dbReference>
<dbReference type="GO" id="GO:0030148">
    <property type="term" value="P:sphingolipid biosynthetic process"/>
    <property type="evidence" value="ECO:0000318"/>
    <property type="project" value="GO_Central"/>
</dbReference>
<dbReference type="GO" id="GO:0042761">
    <property type="term" value="P:very long-chain fatty acid biosynthetic process"/>
    <property type="evidence" value="ECO:0000318"/>
    <property type="project" value="GO_Central"/>
</dbReference>
<dbReference type="InterPro" id="IPR002076">
    <property type="entry name" value="ELO_fam"/>
</dbReference>
<dbReference type="PANTHER" id="PTHR11157:SF104">
    <property type="entry name" value="ELONGATION OF FATTY ACIDS PROTEIN SRE1"/>
    <property type="match status" value="1"/>
</dbReference>
<dbReference type="PANTHER" id="PTHR11157">
    <property type="entry name" value="FATTY ACID ACYL TRANSFERASE-RELATED"/>
    <property type="match status" value="1"/>
</dbReference>
<dbReference type="Pfam" id="PF01151">
    <property type="entry name" value="ELO"/>
    <property type="match status" value="1"/>
</dbReference>
<accession>Q54TC9</accession>
<gene>
    <name type="primary">sre1</name>
    <name type="ORF">DDB_G0281821</name>
</gene>
<name>SRE1_DICDI</name>
<evidence type="ECO:0000250" key="1"/>
<evidence type="ECO:0000255" key="2"/>
<evidence type="ECO:0000269" key="3">
    <source>
    </source>
</evidence>
<evidence type="ECO:0000269" key="4">
    <source>
    </source>
</evidence>
<evidence type="ECO:0000305" key="5"/>
<sequence length="268" mass="31440">MDIVKNYLIAFDQYTANFRWESGVTPLSSYVFPFSTSVIYVLVIFALQAIMKNKKGMVLKGFSIIHNINLIILSFSMMSGVMYAAYQQYLEQGAFSLVCEQSSQSVQGRIGFWIYIFYLSKYYELVDTVILALKKKPIIFLHIFHHMAMVPVTWQWLHDQWLVGSWWCTLVNSFIHVLMYYYYLQTTLGNPCWFKKYITKAQIVQFLTGTAMVSYWFVIRDSEKCQAPLSPAIVSNTINSFFIILFGKFYYDSYKSNSRRQEKLNKVE</sequence>
<organism>
    <name type="scientific">Dictyostelium discoideum</name>
    <name type="common">Social amoeba</name>
    <dbReference type="NCBI Taxonomy" id="44689"/>
    <lineage>
        <taxon>Eukaryota</taxon>
        <taxon>Amoebozoa</taxon>
        <taxon>Evosea</taxon>
        <taxon>Eumycetozoa</taxon>
        <taxon>Dictyostelia</taxon>
        <taxon>Dictyosteliales</taxon>
        <taxon>Dictyosteliaceae</taxon>
        <taxon>Dictyostelium</taxon>
    </lineage>
</organism>
<proteinExistence type="evidence at transcript level"/>
<comment type="function">
    <text evidence="1">Could be implicated in synthesis of very long chain fatty acids.</text>
</comment>
<comment type="catalytic activity">
    <reaction>
        <text>a very-long-chain acyl-CoA + malonyl-CoA + H(+) = a very-long-chain 3-oxoacyl-CoA + CO2 + CoA</text>
        <dbReference type="Rhea" id="RHEA:32727"/>
        <dbReference type="ChEBI" id="CHEBI:15378"/>
        <dbReference type="ChEBI" id="CHEBI:16526"/>
        <dbReference type="ChEBI" id="CHEBI:57287"/>
        <dbReference type="ChEBI" id="CHEBI:57384"/>
        <dbReference type="ChEBI" id="CHEBI:90725"/>
        <dbReference type="ChEBI" id="CHEBI:90736"/>
        <dbReference type="EC" id="2.3.1.199"/>
    </reaction>
</comment>
<comment type="subcellular location">
    <subcellularLocation>
        <location evidence="5">Membrane</location>
        <topology evidence="5">Multi-pass membrane protein</topology>
    </subcellularLocation>
</comment>
<comment type="developmental stage">
    <text evidence="3">Expressed at low levels in prespore cells at the tipped aggregate stage, expressed in the anterior funnel cells in slugs, and then become enriched in upper cup cells during culmination.</text>
</comment>
<comment type="induction">
    <text evidence="4">By STATa.</text>
</comment>
<comment type="similarity">
    <text evidence="5">Belongs to the ELO family.</text>
</comment>
<reference key="1">
    <citation type="journal article" date="2005" name="Nature">
        <title>The genome of the social amoeba Dictyostelium discoideum.</title>
        <authorList>
            <person name="Eichinger L."/>
            <person name="Pachebat J.A."/>
            <person name="Gloeckner G."/>
            <person name="Rajandream M.A."/>
            <person name="Sucgang R."/>
            <person name="Berriman M."/>
            <person name="Song J."/>
            <person name="Olsen R."/>
            <person name="Szafranski K."/>
            <person name="Xu Q."/>
            <person name="Tunggal B."/>
            <person name="Kummerfeld S."/>
            <person name="Madera M."/>
            <person name="Konfortov B.A."/>
            <person name="Rivero F."/>
            <person name="Bankier A.T."/>
            <person name="Lehmann R."/>
            <person name="Hamlin N."/>
            <person name="Davies R."/>
            <person name="Gaudet P."/>
            <person name="Fey P."/>
            <person name="Pilcher K."/>
            <person name="Chen G."/>
            <person name="Saunders D."/>
            <person name="Sodergren E.J."/>
            <person name="Davis P."/>
            <person name="Kerhornou A."/>
            <person name="Nie X."/>
            <person name="Hall N."/>
            <person name="Anjard C."/>
            <person name="Hemphill L."/>
            <person name="Bason N."/>
            <person name="Farbrother P."/>
            <person name="Desany B."/>
            <person name="Just E."/>
            <person name="Morio T."/>
            <person name="Rost R."/>
            <person name="Churcher C.M."/>
            <person name="Cooper J."/>
            <person name="Haydock S."/>
            <person name="van Driessche N."/>
            <person name="Cronin A."/>
            <person name="Goodhead I."/>
            <person name="Muzny D.M."/>
            <person name="Mourier T."/>
            <person name="Pain A."/>
            <person name="Lu M."/>
            <person name="Harper D."/>
            <person name="Lindsay R."/>
            <person name="Hauser H."/>
            <person name="James K.D."/>
            <person name="Quiles M."/>
            <person name="Madan Babu M."/>
            <person name="Saito T."/>
            <person name="Buchrieser C."/>
            <person name="Wardroper A."/>
            <person name="Felder M."/>
            <person name="Thangavelu M."/>
            <person name="Johnson D."/>
            <person name="Knights A."/>
            <person name="Loulseged H."/>
            <person name="Mungall K.L."/>
            <person name="Oliver K."/>
            <person name="Price C."/>
            <person name="Quail M.A."/>
            <person name="Urushihara H."/>
            <person name="Hernandez J."/>
            <person name="Rabbinowitsch E."/>
            <person name="Steffen D."/>
            <person name="Sanders M."/>
            <person name="Ma J."/>
            <person name="Kohara Y."/>
            <person name="Sharp S."/>
            <person name="Simmonds M.N."/>
            <person name="Spiegler S."/>
            <person name="Tivey A."/>
            <person name="Sugano S."/>
            <person name="White B."/>
            <person name="Walker D."/>
            <person name="Woodward J.R."/>
            <person name="Winckler T."/>
            <person name="Tanaka Y."/>
            <person name="Shaulsky G."/>
            <person name="Schleicher M."/>
            <person name="Weinstock G.M."/>
            <person name="Rosenthal A."/>
            <person name="Cox E.C."/>
            <person name="Chisholm R.L."/>
            <person name="Gibbs R.A."/>
            <person name="Loomis W.F."/>
            <person name="Platzer M."/>
            <person name="Kay R.R."/>
            <person name="Williams J.G."/>
            <person name="Dear P.H."/>
            <person name="Noegel A.A."/>
            <person name="Barrell B.G."/>
            <person name="Kuspa A."/>
        </authorList>
    </citation>
    <scope>NUCLEOTIDE SEQUENCE [LARGE SCALE GENOMIC DNA]</scope>
    <source>
        <strain>AX4</strain>
    </source>
</reference>
<reference key="2">
    <citation type="journal article" date="2003" name="Eukaryot. Cell">
        <title>Changing patterns of gene expression in Dictyostelium prestalk cell subtypes recognized by in situ hybridization with genes from microarray analyses.</title>
        <authorList>
            <person name="Maeda M."/>
            <person name="Sakamoto H."/>
            <person name="Iranfar N."/>
            <person name="Fuller D."/>
            <person name="Maruo T."/>
            <person name="Ogihara S."/>
            <person name="Morio T."/>
            <person name="Urushihara H."/>
            <person name="Tanaka Y."/>
            <person name="Loomis W.F."/>
        </authorList>
    </citation>
    <scope>DEVELOPMENTAL STAGE [LARGE SCALE ANALYSIS]</scope>
</reference>
<reference key="3">
    <citation type="journal article" date="2004" name="Int. J. Dev. Biol.">
        <title>Identification of new modes of Dd-STATa regulation of gene expression in Dictyostelium by in situ hybridisation.</title>
        <authorList>
            <person name="Shimada N."/>
            <person name="Maeda M."/>
            <person name="Urushihara H."/>
            <person name="Kawata T."/>
        </authorList>
    </citation>
    <scope>INDUCTION BY STATA</scope>
</reference>